<protein>
    <recommendedName>
        <fullName>Putative uncharacterized protein YPR059C</fullName>
    </recommendedName>
</protein>
<gene>
    <name type="ordered locus">YPR059C</name>
</gene>
<evidence type="ECO:0000305" key="1"/>
<evidence type="ECO:0000305" key="2">
    <source>
    </source>
</evidence>
<organism>
    <name type="scientific">Saccharomyces cerevisiae (strain ATCC 204508 / S288c)</name>
    <name type="common">Baker's yeast</name>
    <dbReference type="NCBI Taxonomy" id="559292"/>
    <lineage>
        <taxon>Eukaryota</taxon>
        <taxon>Fungi</taxon>
        <taxon>Dikarya</taxon>
        <taxon>Ascomycota</taxon>
        <taxon>Saccharomycotina</taxon>
        <taxon>Saccharomycetes</taxon>
        <taxon>Saccharomycetales</taxon>
        <taxon>Saccharomycetaceae</taxon>
        <taxon>Saccharomyces</taxon>
    </lineage>
</organism>
<name>YP059_YEAST</name>
<dbReference type="EMBL" id="Z49219">
    <property type="status" value="NOT_ANNOTATED_CDS"/>
    <property type="molecule type" value="Genomic_DNA"/>
</dbReference>
<dbReference type="EMBL" id="Z71255">
    <property type="status" value="NOT_ANNOTATED_CDS"/>
    <property type="molecule type" value="Genomic_DNA"/>
</dbReference>
<dbReference type="PIR" id="S69473">
    <property type="entry name" value="S69473"/>
</dbReference>
<dbReference type="PaxDb" id="4932-YPR059C"/>
<dbReference type="EnsemblFungi" id="YPR059C_mRNA">
    <property type="protein sequence ID" value="YPR059C"/>
    <property type="gene ID" value="YPR059C"/>
</dbReference>
<dbReference type="AGR" id="SGD:S000006263"/>
<dbReference type="SGD" id="S000006263">
    <property type="gene designation" value="YPR059C"/>
</dbReference>
<dbReference type="HOGENOM" id="CLU_1961303_0_0_1"/>
<sequence>MAHKFYRNYQPNNLIANSKVAKVAPLAGAALSMVGPNPLKKAPIPPLAYKVLATLEIELPNLGFCKLSVCMTDLMTSNGYTINHKAVPDNAPKIQSFHAGMSFLSSPRLLFIWLAINASYTKKYVPHP</sequence>
<feature type="chain" id="PRO_0000302032" description="Putative uncharacterized protein YPR059C">
    <location>
        <begin position="1"/>
        <end position="128"/>
    </location>
</feature>
<comment type="miscellaneous">
    <text evidence="1">Partially overlaps YMC1.</text>
</comment>
<comment type="caution">
    <text evidence="2">Product of a dubious gene prediction unlikely to encode a functional protein. Because of that it is not part of the S.cerevisiae S288c complete/reference proteome set.</text>
</comment>
<proteinExistence type="uncertain"/>
<reference key="1">
    <citation type="journal article" date="1997" name="Nature">
        <title>The nucleotide sequence of Saccharomyces cerevisiae chromosome XVI.</title>
        <authorList>
            <person name="Bussey H."/>
            <person name="Storms R.K."/>
            <person name="Ahmed A."/>
            <person name="Albermann K."/>
            <person name="Allen E."/>
            <person name="Ansorge W."/>
            <person name="Araujo R."/>
            <person name="Aparicio A."/>
            <person name="Barrell B.G."/>
            <person name="Badcock K."/>
            <person name="Benes V."/>
            <person name="Botstein D."/>
            <person name="Bowman S."/>
            <person name="Brueckner M."/>
            <person name="Carpenter J."/>
            <person name="Cherry J.M."/>
            <person name="Chung E."/>
            <person name="Churcher C.M."/>
            <person name="Coster F."/>
            <person name="Davis K."/>
            <person name="Davis R.W."/>
            <person name="Dietrich F.S."/>
            <person name="Delius H."/>
            <person name="DiPaolo T."/>
            <person name="Dubois E."/>
            <person name="Duesterhoeft A."/>
            <person name="Duncan M."/>
            <person name="Floeth M."/>
            <person name="Fortin N."/>
            <person name="Friesen J.D."/>
            <person name="Fritz C."/>
            <person name="Goffeau A."/>
            <person name="Hall J."/>
            <person name="Hebling U."/>
            <person name="Heumann K."/>
            <person name="Hilbert H."/>
            <person name="Hillier L.W."/>
            <person name="Hunicke-Smith S."/>
            <person name="Hyman R.W."/>
            <person name="Johnston M."/>
            <person name="Kalman S."/>
            <person name="Kleine K."/>
            <person name="Komp C."/>
            <person name="Kurdi O."/>
            <person name="Lashkari D."/>
            <person name="Lew H."/>
            <person name="Lin A."/>
            <person name="Lin D."/>
            <person name="Louis E.J."/>
            <person name="Marathe R."/>
            <person name="Messenguy F."/>
            <person name="Mewes H.-W."/>
            <person name="Mirtipati S."/>
            <person name="Moestl D."/>
            <person name="Mueller-Auer S."/>
            <person name="Namath A."/>
            <person name="Nentwich U."/>
            <person name="Oefner P."/>
            <person name="Pearson D."/>
            <person name="Petel F.X."/>
            <person name="Pohl T.M."/>
            <person name="Purnelle B."/>
            <person name="Rajandream M.A."/>
            <person name="Rechmann S."/>
            <person name="Rieger M."/>
            <person name="Riles L."/>
            <person name="Roberts D."/>
            <person name="Schaefer M."/>
            <person name="Scharfe M."/>
            <person name="Scherens B."/>
            <person name="Schramm S."/>
            <person name="Schroeder M."/>
            <person name="Sdicu A.-M."/>
            <person name="Tettelin H."/>
            <person name="Urrestarazu L.A."/>
            <person name="Ushinsky S."/>
            <person name="Vierendeels F."/>
            <person name="Vissers S."/>
            <person name="Voss H."/>
            <person name="Walsh S.V."/>
            <person name="Wambutt R."/>
            <person name="Wang Y."/>
            <person name="Wedler E."/>
            <person name="Wedler H."/>
            <person name="Winnett E."/>
            <person name="Zhong W.-W."/>
            <person name="Zollner A."/>
            <person name="Vo D.H."/>
            <person name="Hani J."/>
        </authorList>
    </citation>
    <scope>NUCLEOTIDE SEQUENCE [LARGE SCALE GENOMIC DNA]</scope>
    <source>
        <strain>ATCC 204508 / S288c</strain>
    </source>
</reference>
<reference key="2">
    <citation type="journal article" date="2014" name="G3 (Bethesda)">
        <title>The reference genome sequence of Saccharomyces cerevisiae: Then and now.</title>
        <authorList>
            <person name="Engel S.R."/>
            <person name="Dietrich F.S."/>
            <person name="Fisk D.G."/>
            <person name="Binkley G."/>
            <person name="Balakrishnan R."/>
            <person name="Costanzo M.C."/>
            <person name="Dwight S.S."/>
            <person name="Hitz B.C."/>
            <person name="Karra K."/>
            <person name="Nash R.S."/>
            <person name="Weng S."/>
            <person name="Wong E.D."/>
            <person name="Lloyd P."/>
            <person name="Skrzypek M.S."/>
            <person name="Miyasato S.R."/>
            <person name="Simison M."/>
            <person name="Cherry J.M."/>
        </authorList>
    </citation>
    <scope>GENOME REANNOTATION</scope>
    <source>
        <strain>ATCC 204508 / S288c</strain>
    </source>
</reference>
<accession>P0C5E1</accession>